<reference key="1">
    <citation type="journal article" date="2007" name="PLoS Genet.">
        <title>Meningococcal genetic variation mechanisms viewed through comparative analysis of serogroup C strain FAM18.</title>
        <authorList>
            <person name="Bentley S.D."/>
            <person name="Vernikos G.S."/>
            <person name="Snyder L.A.S."/>
            <person name="Churcher C."/>
            <person name="Arrowsmith C."/>
            <person name="Chillingworth T."/>
            <person name="Cronin A."/>
            <person name="Davis P.H."/>
            <person name="Holroyd N.E."/>
            <person name="Jagels K."/>
            <person name="Maddison M."/>
            <person name="Moule S."/>
            <person name="Rabbinowitsch E."/>
            <person name="Sharp S."/>
            <person name="Unwin L."/>
            <person name="Whitehead S."/>
            <person name="Quail M.A."/>
            <person name="Achtman M."/>
            <person name="Barrell B.G."/>
            <person name="Saunders N.J."/>
            <person name="Parkhill J."/>
        </authorList>
    </citation>
    <scope>NUCLEOTIDE SEQUENCE [LARGE SCALE GENOMIC DNA]</scope>
    <source>
        <strain>ATCC 700532 / DSM 15464 / FAM18</strain>
    </source>
</reference>
<keyword id="KW-0963">Cytoplasm</keyword>
<keyword id="KW-0648">Protein biosynthesis</keyword>
<evidence type="ECO:0000255" key="1">
    <source>
        <dbReference type="HAMAP-Rule" id="MF_00040"/>
    </source>
</evidence>
<accession>A1KRL9</accession>
<protein>
    <recommendedName>
        <fullName evidence="1">Ribosome-recycling factor</fullName>
        <shortName evidence="1">RRF</shortName>
    </recommendedName>
    <alternativeName>
        <fullName evidence="1">Ribosome-releasing factor</fullName>
    </alternativeName>
</protein>
<gene>
    <name evidence="1" type="primary">frr</name>
    <name type="ordered locus">NMC0178</name>
</gene>
<organism>
    <name type="scientific">Neisseria meningitidis serogroup C / serotype 2a (strain ATCC 700532 / DSM 15464 / FAM18)</name>
    <dbReference type="NCBI Taxonomy" id="272831"/>
    <lineage>
        <taxon>Bacteria</taxon>
        <taxon>Pseudomonadati</taxon>
        <taxon>Pseudomonadota</taxon>
        <taxon>Betaproteobacteria</taxon>
        <taxon>Neisseriales</taxon>
        <taxon>Neisseriaceae</taxon>
        <taxon>Neisseria</taxon>
    </lineage>
</organism>
<dbReference type="EMBL" id="AM421808">
    <property type="protein sequence ID" value="CAM09497.1"/>
    <property type="molecule type" value="Genomic_DNA"/>
</dbReference>
<dbReference type="RefSeq" id="WP_002216270.1">
    <property type="nucleotide sequence ID" value="NC_008767.1"/>
</dbReference>
<dbReference type="SMR" id="A1KRL9"/>
<dbReference type="GeneID" id="93387265"/>
<dbReference type="KEGG" id="nmc:NMC0178"/>
<dbReference type="HOGENOM" id="CLU_073981_2_0_4"/>
<dbReference type="Proteomes" id="UP000002286">
    <property type="component" value="Chromosome"/>
</dbReference>
<dbReference type="GO" id="GO:0005829">
    <property type="term" value="C:cytosol"/>
    <property type="evidence" value="ECO:0007669"/>
    <property type="project" value="GOC"/>
</dbReference>
<dbReference type="GO" id="GO:0043023">
    <property type="term" value="F:ribosomal large subunit binding"/>
    <property type="evidence" value="ECO:0007669"/>
    <property type="project" value="TreeGrafter"/>
</dbReference>
<dbReference type="GO" id="GO:0002184">
    <property type="term" value="P:cytoplasmic translational termination"/>
    <property type="evidence" value="ECO:0007669"/>
    <property type="project" value="TreeGrafter"/>
</dbReference>
<dbReference type="CDD" id="cd00520">
    <property type="entry name" value="RRF"/>
    <property type="match status" value="1"/>
</dbReference>
<dbReference type="FunFam" id="1.10.132.20:FF:000001">
    <property type="entry name" value="Ribosome-recycling factor"/>
    <property type="match status" value="1"/>
</dbReference>
<dbReference type="FunFam" id="3.30.1360.40:FF:000001">
    <property type="entry name" value="Ribosome-recycling factor"/>
    <property type="match status" value="1"/>
</dbReference>
<dbReference type="Gene3D" id="3.30.1360.40">
    <property type="match status" value="1"/>
</dbReference>
<dbReference type="Gene3D" id="1.10.132.20">
    <property type="entry name" value="Ribosome-recycling factor"/>
    <property type="match status" value="1"/>
</dbReference>
<dbReference type="HAMAP" id="MF_00040">
    <property type="entry name" value="RRF"/>
    <property type="match status" value="1"/>
</dbReference>
<dbReference type="InterPro" id="IPR002661">
    <property type="entry name" value="Ribosome_recyc_fac"/>
</dbReference>
<dbReference type="InterPro" id="IPR023584">
    <property type="entry name" value="Ribosome_recyc_fac_dom"/>
</dbReference>
<dbReference type="InterPro" id="IPR036191">
    <property type="entry name" value="RRF_sf"/>
</dbReference>
<dbReference type="NCBIfam" id="TIGR00496">
    <property type="entry name" value="frr"/>
    <property type="match status" value="1"/>
</dbReference>
<dbReference type="PANTHER" id="PTHR20982:SF3">
    <property type="entry name" value="MITOCHONDRIAL RIBOSOME RECYCLING FACTOR PSEUDO 1"/>
    <property type="match status" value="1"/>
</dbReference>
<dbReference type="PANTHER" id="PTHR20982">
    <property type="entry name" value="RIBOSOME RECYCLING FACTOR"/>
    <property type="match status" value="1"/>
</dbReference>
<dbReference type="Pfam" id="PF01765">
    <property type="entry name" value="RRF"/>
    <property type="match status" value="1"/>
</dbReference>
<dbReference type="SUPFAM" id="SSF55194">
    <property type="entry name" value="Ribosome recycling factor, RRF"/>
    <property type="match status" value="1"/>
</dbReference>
<comment type="function">
    <text evidence="1">Responsible for the release of ribosomes from messenger RNA at the termination of protein biosynthesis. May increase the efficiency of translation by recycling ribosomes from one round of translation to another.</text>
</comment>
<comment type="subcellular location">
    <subcellularLocation>
        <location evidence="1">Cytoplasm</location>
    </subcellularLocation>
</comment>
<comment type="similarity">
    <text evidence="1">Belongs to the RRF family.</text>
</comment>
<feature type="chain" id="PRO_1000003208" description="Ribosome-recycling factor">
    <location>
        <begin position="1"/>
        <end position="185"/>
    </location>
</feature>
<proteinExistence type="inferred from homology"/>
<sequence>MINDIQKTAEGKMQRSVEVLKENLAKVRTGRAHTGLLDQVEVEYWGSMVPVSQVANVTLLDARTIGVKPFEGNMAAKVEKAIRDSNLGLNPAAVGDLIRVPMPMLTEERRKDLIKVVRGEAEEGRVSIRNVRRDANDHIKKLLKDKEISEDEARRGEEAVQKLTDKYITEADKLLTAKEEDLMAI</sequence>
<name>RRF_NEIMF</name>